<comment type="function">
    <text evidence="1">Catalyzes the transfer of the enolpyruvyl moiety of phosphoenolpyruvate (PEP) to the 5-hydroxyl of shikimate-3-phosphate (S3P) to produce enolpyruvyl shikimate-3-phosphate and inorganic phosphate.</text>
</comment>
<comment type="catalytic activity">
    <reaction evidence="1">
        <text>3-phosphoshikimate + phosphoenolpyruvate = 5-O-(1-carboxyvinyl)-3-phosphoshikimate + phosphate</text>
        <dbReference type="Rhea" id="RHEA:21256"/>
        <dbReference type="ChEBI" id="CHEBI:43474"/>
        <dbReference type="ChEBI" id="CHEBI:57701"/>
        <dbReference type="ChEBI" id="CHEBI:58702"/>
        <dbReference type="ChEBI" id="CHEBI:145989"/>
        <dbReference type="EC" id="2.5.1.19"/>
    </reaction>
    <physiologicalReaction direction="left-to-right" evidence="1">
        <dbReference type="Rhea" id="RHEA:21257"/>
    </physiologicalReaction>
</comment>
<comment type="pathway">
    <text evidence="1">Metabolic intermediate biosynthesis; chorismate biosynthesis; chorismate from D-erythrose 4-phosphate and phosphoenolpyruvate: step 6/7.</text>
</comment>
<comment type="subunit">
    <text evidence="1">Monomer.</text>
</comment>
<comment type="subcellular location">
    <subcellularLocation>
        <location evidence="1">Cytoplasm</location>
    </subcellularLocation>
</comment>
<comment type="similarity">
    <text evidence="1">Belongs to the EPSP synthase family.</text>
</comment>
<proteinExistence type="inferred from homology"/>
<protein>
    <recommendedName>
        <fullName evidence="1">3-phosphoshikimate 1-carboxyvinyltransferase</fullName>
        <ecNumber evidence="1">2.5.1.19</ecNumber>
    </recommendedName>
    <alternativeName>
        <fullName evidence="1">5-enolpyruvylshikimate-3-phosphate synthase</fullName>
        <shortName evidence="1">EPSP synthase</shortName>
        <shortName evidence="1">EPSPS</shortName>
    </alternativeName>
</protein>
<gene>
    <name evidence="1" type="primary">aroA</name>
    <name type="ordered locus">SeD_A1042</name>
</gene>
<organism>
    <name type="scientific">Salmonella dublin (strain CT_02021853)</name>
    <dbReference type="NCBI Taxonomy" id="439851"/>
    <lineage>
        <taxon>Bacteria</taxon>
        <taxon>Pseudomonadati</taxon>
        <taxon>Pseudomonadota</taxon>
        <taxon>Gammaproteobacteria</taxon>
        <taxon>Enterobacterales</taxon>
        <taxon>Enterobacteriaceae</taxon>
        <taxon>Salmonella</taxon>
    </lineage>
</organism>
<keyword id="KW-0028">Amino-acid biosynthesis</keyword>
<keyword id="KW-0057">Aromatic amino acid biosynthesis</keyword>
<keyword id="KW-0963">Cytoplasm</keyword>
<keyword id="KW-0808">Transferase</keyword>
<sequence>MESLTLQPIARVDGAINLPGSKSVSNRALLLAALACGKTVLTNLLDSDDVRHMLNALSALGINYTLSADRTRCDITGNGGPLRAPGALELFLGNAGTAMRPLAAALCLGQNEIVLTGEPRMKERPIGHLVDSLRQGGANIDYLEQENYPPLRLRGGFIGGDIEVDGSVSSQFLTALLMTAPLAPKDTIIRVKGELVSKPYIDITLNLMKTFGVEIANHHYQQFVVKGGQQYHSPGRYLVEGDASSASYFLAAGAIKGGTVKVTGIGRKSMQGDIRFADVLEKMGATITWGDDFIACTRGELHAIDMDMNHIPDAAMTIATTALFAKGTTTLRNIYNWRVKETDRLFAMATELRKVGAEVEEGHDYIRITPPAKLQHADIGTYNDHRMAMCFSLVALSDTPVTILDPKCTAKTFPDYFEQLARMSTPA</sequence>
<feature type="chain" id="PRO_1000099745" description="3-phosphoshikimate 1-carboxyvinyltransferase">
    <location>
        <begin position="1"/>
        <end position="427"/>
    </location>
</feature>
<feature type="active site" description="Proton acceptor" evidence="1">
    <location>
        <position position="313"/>
    </location>
</feature>
<feature type="binding site" evidence="1">
    <location>
        <position position="22"/>
    </location>
    <ligand>
        <name>3-phosphoshikimate</name>
        <dbReference type="ChEBI" id="CHEBI:145989"/>
    </ligand>
</feature>
<feature type="binding site" evidence="1">
    <location>
        <position position="22"/>
    </location>
    <ligand>
        <name>phosphoenolpyruvate</name>
        <dbReference type="ChEBI" id="CHEBI:58702"/>
    </ligand>
</feature>
<feature type="binding site" evidence="1">
    <location>
        <position position="23"/>
    </location>
    <ligand>
        <name>3-phosphoshikimate</name>
        <dbReference type="ChEBI" id="CHEBI:145989"/>
    </ligand>
</feature>
<feature type="binding site" evidence="1">
    <location>
        <position position="27"/>
    </location>
    <ligand>
        <name>3-phosphoshikimate</name>
        <dbReference type="ChEBI" id="CHEBI:145989"/>
    </ligand>
</feature>
<feature type="binding site" evidence="1">
    <location>
        <position position="96"/>
    </location>
    <ligand>
        <name>phosphoenolpyruvate</name>
        <dbReference type="ChEBI" id="CHEBI:58702"/>
    </ligand>
</feature>
<feature type="binding site" evidence="1">
    <location>
        <position position="124"/>
    </location>
    <ligand>
        <name>phosphoenolpyruvate</name>
        <dbReference type="ChEBI" id="CHEBI:58702"/>
    </ligand>
</feature>
<feature type="binding site" evidence="1">
    <location>
        <position position="169"/>
    </location>
    <ligand>
        <name>3-phosphoshikimate</name>
        <dbReference type="ChEBI" id="CHEBI:145989"/>
    </ligand>
</feature>
<feature type="binding site" evidence="1">
    <location>
        <position position="170"/>
    </location>
    <ligand>
        <name>3-phosphoshikimate</name>
        <dbReference type="ChEBI" id="CHEBI:145989"/>
    </ligand>
</feature>
<feature type="binding site" evidence="1">
    <location>
        <position position="171"/>
    </location>
    <ligand>
        <name>3-phosphoshikimate</name>
        <dbReference type="ChEBI" id="CHEBI:145989"/>
    </ligand>
</feature>
<feature type="binding site" evidence="1">
    <location>
        <position position="171"/>
    </location>
    <ligand>
        <name>phosphoenolpyruvate</name>
        <dbReference type="ChEBI" id="CHEBI:58702"/>
    </ligand>
</feature>
<feature type="binding site" evidence="1">
    <location>
        <position position="197"/>
    </location>
    <ligand>
        <name>3-phosphoshikimate</name>
        <dbReference type="ChEBI" id="CHEBI:145989"/>
    </ligand>
</feature>
<feature type="binding site" evidence="1">
    <location>
        <position position="313"/>
    </location>
    <ligand>
        <name>3-phosphoshikimate</name>
        <dbReference type="ChEBI" id="CHEBI:145989"/>
    </ligand>
</feature>
<feature type="binding site" evidence="1">
    <location>
        <position position="336"/>
    </location>
    <ligand>
        <name>3-phosphoshikimate</name>
        <dbReference type="ChEBI" id="CHEBI:145989"/>
    </ligand>
</feature>
<feature type="binding site" evidence="1">
    <location>
        <position position="340"/>
    </location>
    <ligand>
        <name>3-phosphoshikimate</name>
        <dbReference type="ChEBI" id="CHEBI:145989"/>
    </ligand>
</feature>
<feature type="binding site" evidence="1">
    <location>
        <position position="344"/>
    </location>
    <ligand>
        <name>phosphoenolpyruvate</name>
        <dbReference type="ChEBI" id="CHEBI:58702"/>
    </ligand>
</feature>
<feature type="binding site" evidence="1">
    <location>
        <position position="386"/>
    </location>
    <ligand>
        <name>phosphoenolpyruvate</name>
        <dbReference type="ChEBI" id="CHEBI:58702"/>
    </ligand>
</feature>
<feature type="binding site" evidence="1">
    <location>
        <position position="411"/>
    </location>
    <ligand>
        <name>phosphoenolpyruvate</name>
        <dbReference type="ChEBI" id="CHEBI:58702"/>
    </ligand>
</feature>
<reference key="1">
    <citation type="journal article" date="2011" name="J. Bacteriol.">
        <title>Comparative genomics of 28 Salmonella enterica isolates: evidence for CRISPR-mediated adaptive sublineage evolution.</title>
        <authorList>
            <person name="Fricke W.F."/>
            <person name="Mammel M.K."/>
            <person name="McDermott P.F."/>
            <person name="Tartera C."/>
            <person name="White D.G."/>
            <person name="Leclerc J.E."/>
            <person name="Ravel J."/>
            <person name="Cebula T.A."/>
        </authorList>
    </citation>
    <scope>NUCLEOTIDE SEQUENCE [LARGE SCALE GENOMIC DNA]</scope>
    <source>
        <strain>CT_02021853</strain>
    </source>
</reference>
<accession>B5FQ51</accession>
<evidence type="ECO:0000255" key="1">
    <source>
        <dbReference type="HAMAP-Rule" id="MF_00210"/>
    </source>
</evidence>
<name>AROA_SALDC</name>
<dbReference type="EC" id="2.5.1.19" evidence="1"/>
<dbReference type="EMBL" id="CP001144">
    <property type="protein sequence ID" value="ACH77880.1"/>
    <property type="molecule type" value="Genomic_DNA"/>
</dbReference>
<dbReference type="RefSeq" id="WP_000445198.1">
    <property type="nucleotide sequence ID" value="NC_011205.1"/>
</dbReference>
<dbReference type="SMR" id="B5FQ51"/>
<dbReference type="KEGG" id="sed:SeD_A1042"/>
<dbReference type="HOGENOM" id="CLU_024321_0_0_6"/>
<dbReference type="UniPathway" id="UPA00053">
    <property type="reaction ID" value="UER00089"/>
</dbReference>
<dbReference type="Proteomes" id="UP000008322">
    <property type="component" value="Chromosome"/>
</dbReference>
<dbReference type="GO" id="GO:0005737">
    <property type="term" value="C:cytoplasm"/>
    <property type="evidence" value="ECO:0007669"/>
    <property type="project" value="UniProtKB-SubCell"/>
</dbReference>
<dbReference type="GO" id="GO:0003866">
    <property type="term" value="F:3-phosphoshikimate 1-carboxyvinyltransferase activity"/>
    <property type="evidence" value="ECO:0007669"/>
    <property type="project" value="UniProtKB-UniRule"/>
</dbReference>
<dbReference type="GO" id="GO:0008652">
    <property type="term" value="P:amino acid biosynthetic process"/>
    <property type="evidence" value="ECO:0007669"/>
    <property type="project" value="UniProtKB-KW"/>
</dbReference>
<dbReference type="GO" id="GO:0009073">
    <property type="term" value="P:aromatic amino acid family biosynthetic process"/>
    <property type="evidence" value="ECO:0007669"/>
    <property type="project" value="UniProtKB-KW"/>
</dbReference>
<dbReference type="GO" id="GO:0009423">
    <property type="term" value="P:chorismate biosynthetic process"/>
    <property type="evidence" value="ECO:0007669"/>
    <property type="project" value="UniProtKB-UniRule"/>
</dbReference>
<dbReference type="FunFam" id="3.65.10.10:FF:000003">
    <property type="entry name" value="3-phosphoshikimate 1-carboxyvinyltransferase"/>
    <property type="match status" value="1"/>
</dbReference>
<dbReference type="FunFam" id="3.65.10.10:FF:000004">
    <property type="entry name" value="3-phosphoshikimate 1-carboxyvinyltransferase"/>
    <property type="match status" value="1"/>
</dbReference>
<dbReference type="Gene3D" id="3.65.10.10">
    <property type="entry name" value="Enolpyruvate transferase domain"/>
    <property type="match status" value="2"/>
</dbReference>
<dbReference type="HAMAP" id="MF_00210">
    <property type="entry name" value="EPSP_synth"/>
    <property type="match status" value="1"/>
</dbReference>
<dbReference type="InterPro" id="IPR001986">
    <property type="entry name" value="Enolpyruvate_Tfrase_dom"/>
</dbReference>
<dbReference type="InterPro" id="IPR036968">
    <property type="entry name" value="Enolpyruvate_Tfrase_sf"/>
</dbReference>
<dbReference type="InterPro" id="IPR006264">
    <property type="entry name" value="EPSP_synthase"/>
</dbReference>
<dbReference type="InterPro" id="IPR023193">
    <property type="entry name" value="EPSP_synthase_CS"/>
</dbReference>
<dbReference type="InterPro" id="IPR013792">
    <property type="entry name" value="RNA3'P_cycl/enolpyr_Trfase_a/b"/>
</dbReference>
<dbReference type="NCBIfam" id="TIGR01356">
    <property type="entry name" value="aroA"/>
    <property type="match status" value="1"/>
</dbReference>
<dbReference type="PANTHER" id="PTHR21090">
    <property type="entry name" value="AROM/DEHYDROQUINATE SYNTHASE"/>
    <property type="match status" value="1"/>
</dbReference>
<dbReference type="PANTHER" id="PTHR21090:SF5">
    <property type="entry name" value="PENTAFUNCTIONAL AROM POLYPEPTIDE"/>
    <property type="match status" value="1"/>
</dbReference>
<dbReference type="Pfam" id="PF00275">
    <property type="entry name" value="EPSP_synthase"/>
    <property type="match status" value="1"/>
</dbReference>
<dbReference type="PIRSF" id="PIRSF000505">
    <property type="entry name" value="EPSPS"/>
    <property type="match status" value="1"/>
</dbReference>
<dbReference type="SUPFAM" id="SSF55205">
    <property type="entry name" value="EPT/RTPC-like"/>
    <property type="match status" value="1"/>
</dbReference>
<dbReference type="PROSITE" id="PS00104">
    <property type="entry name" value="EPSP_SYNTHASE_1"/>
    <property type="match status" value="1"/>
</dbReference>
<dbReference type="PROSITE" id="PS00885">
    <property type="entry name" value="EPSP_SYNTHASE_2"/>
    <property type="match status" value="1"/>
</dbReference>